<protein>
    <recommendedName>
        <fullName>Histone H2B 1.2</fullName>
        <shortName>H2B1.2</shortName>
    </recommendedName>
</protein>
<keyword id="KW-0007">Acetylation</keyword>
<keyword id="KW-0158">Chromosome</keyword>
<keyword id="KW-0238">DNA-binding</keyword>
<keyword id="KW-0325">Glycoprotein</keyword>
<keyword id="KW-1017">Isopeptide bond</keyword>
<keyword id="KW-0544">Nucleosome core</keyword>
<keyword id="KW-0539">Nucleus</keyword>
<keyword id="KW-0597">Phosphoprotein</keyword>
<keyword id="KW-1185">Reference proteome</keyword>
<keyword id="KW-0832">Ubl conjugation</keyword>
<comment type="function">
    <text>Core component of nucleosome. Nucleosomes wrap and compact DNA into chromatin, limiting DNA accessibility to the cellular machineries which require DNA as a template. Histones thereby play a central role in transcription regulation, DNA repair, DNA replication and chromosomal stability. DNA accessibility is regulated via a complex set of post-translational modifications of histones, also called histone code, and nucleosome remodeling.</text>
</comment>
<comment type="subunit">
    <text>The nucleosome is a histone octamer containing two molecules each of H2A, H2B, H3 and H4 assembled in one H3-H4 heterotetramer and two H2A-H2B heterodimers. The octamer wraps approximately 147 bp of DNA.</text>
</comment>
<comment type="subcellular location">
    <subcellularLocation>
        <location>Nucleus</location>
    </subcellularLocation>
    <subcellularLocation>
        <location>Chromosome</location>
    </subcellularLocation>
</comment>
<comment type="PTM">
    <text evidence="3">Monoubiquitination of Lys-121 by BRE1 gives a specific tag for epigenetic transcriptional activation and is also prerequisite for histone H3 'Lys-4' and 'Lys-79' methylation.</text>
</comment>
<comment type="PTM">
    <text evidence="6">Phosphorylated on Ser-15 during developmentally programmed apoptosis; which may facilitate apoptotic chromatin condensation.</text>
</comment>
<comment type="PTM">
    <text evidence="4">GlcNAcylation at Ser-113 promotes monoubiquitination of Lys-121. It fluctuates in response to extracellular glucose, and associates with transcribed genes (By similarity).</text>
</comment>
<comment type="similarity">
    <text evidence="7">Belongs to the histone H2B family.</text>
</comment>
<name>H2B12_XENLA</name>
<proteinExistence type="evidence at protein level"/>
<dbReference type="EMBL" id="X03017">
    <property type="protein sequence ID" value="CAA26811.1"/>
    <property type="molecule type" value="Genomic_DNA"/>
</dbReference>
<dbReference type="EMBL" id="M21286">
    <property type="protein sequence ID" value="AAA49763.1"/>
    <property type="molecule type" value="Genomic_DNA"/>
</dbReference>
<dbReference type="PIR" id="B24510">
    <property type="entry name" value="HSXLB2"/>
</dbReference>
<dbReference type="PIR" id="I51446">
    <property type="entry name" value="I51446"/>
</dbReference>
<dbReference type="RefSeq" id="XP_018098035.1">
    <property type="nucleotide sequence ID" value="XM_018242546.2"/>
</dbReference>
<dbReference type="RefSeq" id="XP_018098037.1">
    <property type="nucleotide sequence ID" value="XM_018242548.2"/>
</dbReference>
<dbReference type="RefSeq" id="XP_018098038.1">
    <property type="nucleotide sequence ID" value="XM_018242549.2"/>
</dbReference>
<dbReference type="RefSeq" id="XP_041418541.1">
    <property type="nucleotide sequence ID" value="XM_041562607.1"/>
</dbReference>
<dbReference type="RefSeq" id="XP_041432566.1">
    <property type="nucleotide sequence ID" value="XM_041576632.1"/>
</dbReference>
<dbReference type="RefSeq" id="XP_041432567.1">
    <property type="nucleotide sequence ID" value="XM_041576633.1"/>
</dbReference>
<dbReference type="RefSeq" id="XP_041432568.1">
    <property type="nucleotide sequence ID" value="XM_041576634.1"/>
</dbReference>
<dbReference type="SMR" id="P06900"/>
<dbReference type="iPTMnet" id="P06900"/>
<dbReference type="GeneID" id="108705671"/>
<dbReference type="GeneID" id="108705673"/>
<dbReference type="GeneID" id="108705674"/>
<dbReference type="GeneID" id="121393614"/>
<dbReference type="GeneID" id="121398080"/>
<dbReference type="GeneID" id="121398081"/>
<dbReference type="GeneID" id="121398082"/>
<dbReference type="KEGG" id="xla:108705671"/>
<dbReference type="KEGG" id="xla:108705673"/>
<dbReference type="KEGG" id="xla:108705674"/>
<dbReference type="OrthoDB" id="1733721at2759"/>
<dbReference type="Proteomes" id="UP000186698">
    <property type="component" value="Chromosome 5L"/>
</dbReference>
<dbReference type="Proteomes" id="UP000186698">
    <property type="component" value="Chromosome 9_10L"/>
</dbReference>
<dbReference type="Bgee" id="108705671">
    <property type="expression patterns" value="Expressed in oocyte and 7 other cell types or tissues"/>
</dbReference>
<dbReference type="GO" id="GO:0000786">
    <property type="term" value="C:nucleosome"/>
    <property type="evidence" value="ECO:0007669"/>
    <property type="project" value="UniProtKB-KW"/>
</dbReference>
<dbReference type="GO" id="GO:0005634">
    <property type="term" value="C:nucleus"/>
    <property type="evidence" value="ECO:0007669"/>
    <property type="project" value="UniProtKB-SubCell"/>
</dbReference>
<dbReference type="GO" id="GO:0003677">
    <property type="term" value="F:DNA binding"/>
    <property type="evidence" value="ECO:0007669"/>
    <property type="project" value="UniProtKB-KW"/>
</dbReference>
<dbReference type="GO" id="GO:0046982">
    <property type="term" value="F:protein heterodimerization activity"/>
    <property type="evidence" value="ECO:0007669"/>
    <property type="project" value="InterPro"/>
</dbReference>
<dbReference type="GO" id="GO:0030527">
    <property type="term" value="F:structural constituent of chromatin"/>
    <property type="evidence" value="ECO:0007669"/>
    <property type="project" value="InterPro"/>
</dbReference>
<dbReference type="CDD" id="cd22910">
    <property type="entry name" value="HFD_H2B"/>
    <property type="match status" value="1"/>
</dbReference>
<dbReference type="FunFam" id="1.10.20.10:FF:000003">
    <property type="entry name" value="Histone H2B"/>
    <property type="match status" value="1"/>
</dbReference>
<dbReference type="Gene3D" id="1.10.20.10">
    <property type="entry name" value="Histone, subunit A"/>
    <property type="match status" value="1"/>
</dbReference>
<dbReference type="InterPro" id="IPR009072">
    <property type="entry name" value="Histone-fold"/>
</dbReference>
<dbReference type="InterPro" id="IPR007125">
    <property type="entry name" value="Histone_H2A/H2B/H3"/>
</dbReference>
<dbReference type="InterPro" id="IPR000558">
    <property type="entry name" value="Histone_H2B"/>
</dbReference>
<dbReference type="InterPro" id="IPR055333">
    <property type="entry name" value="HISTONE_H2B_site"/>
</dbReference>
<dbReference type="PANTHER" id="PTHR23428">
    <property type="entry name" value="HISTONE H2B"/>
    <property type="match status" value="1"/>
</dbReference>
<dbReference type="Pfam" id="PF00125">
    <property type="entry name" value="Histone"/>
    <property type="match status" value="1"/>
</dbReference>
<dbReference type="PRINTS" id="PR00621">
    <property type="entry name" value="HISTONEH2B"/>
</dbReference>
<dbReference type="SMART" id="SM00427">
    <property type="entry name" value="H2B"/>
    <property type="match status" value="1"/>
</dbReference>
<dbReference type="SUPFAM" id="SSF47113">
    <property type="entry name" value="Histone-fold"/>
    <property type="match status" value="1"/>
</dbReference>
<dbReference type="PROSITE" id="PS00357">
    <property type="entry name" value="HISTONE_H2B"/>
    <property type="match status" value="1"/>
</dbReference>
<reference key="1">
    <citation type="journal article" date="1985" name="J. Mol. Biol.">
        <title>Genomic organization and nucleotide sequence of two distinct histone gene clusters from Xenopus laevis. Identification of novel conserved upstream sequence elements.</title>
        <authorList>
            <person name="Perry M."/>
            <person name="Thomsen G.H."/>
            <person name="Roeder R.G."/>
        </authorList>
    </citation>
    <scope>NUCLEOTIDE SEQUENCE [GENOMIC DNA] (GENE CLUSTER X1H1)</scope>
</reference>
<reference key="2">
    <citation type="journal article" date="2003" name="Cell">
        <title>Apoptotic phosphorylation of histone H2B is mediated by mammalian sterile twenty kinase.</title>
        <authorList>
            <person name="Cheung W.L."/>
            <person name="Ajiro K."/>
            <person name="Samejima K."/>
            <person name="Kloc M."/>
            <person name="Cheung P."/>
            <person name="Mizzen C.A."/>
            <person name="Beeser A."/>
            <person name="Etkin L.D."/>
            <person name="Chernoff J."/>
            <person name="Earnshaw W.C."/>
            <person name="Allis C.D."/>
        </authorList>
    </citation>
    <scope>PHOSPHORYLATION AT SER-15</scope>
</reference>
<sequence length="126" mass="13905">MPEPAKSAPAPKKGSKKAVTKTPKKDGKKRRKSRKESYAIYVYKVMKQVHPDTGISSKAMGIMNSFVNDIFERIAGEASRLAHYNKRSTITSREIQTAVRLLLPGELAKHAVSEGTKAVTKYTSAK</sequence>
<organism>
    <name type="scientific">Xenopus laevis</name>
    <name type="common">African clawed frog</name>
    <dbReference type="NCBI Taxonomy" id="8355"/>
    <lineage>
        <taxon>Eukaryota</taxon>
        <taxon>Metazoa</taxon>
        <taxon>Chordata</taxon>
        <taxon>Craniata</taxon>
        <taxon>Vertebrata</taxon>
        <taxon>Euteleostomi</taxon>
        <taxon>Amphibia</taxon>
        <taxon>Batrachia</taxon>
        <taxon>Anura</taxon>
        <taxon>Pipoidea</taxon>
        <taxon>Pipidae</taxon>
        <taxon>Xenopodinae</taxon>
        <taxon>Xenopus</taxon>
        <taxon>Xenopus</taxon>
    </lineage>
</organism>
<feature type="initiator methionine" description="Removed" evidence="1">
    <location>
        <position position="1"/>
    </location>
</feature>
<feature type="chain" id="PRO_0000071855" description="Histone H2B 1.2">
    <location>
        <begin position="2"/>
        <end position="126"/>
    </location>
</feature>
<feature type="region of interest" description="Disordered" evidence="5">
    <location>
        <begin position="1"/>
        <end position="35"/>
    </location>
</feature>
<feature type="compositionally biased region" description="Low complexity" evidence="5">
    <location>
        <begin position="1"/>
        <end position="12"/>
    </location>
</feature>
<feature type="modified residue" description="N6-acetyllysine" evidence="2">
    <location>
        <position position="6"/>
    </location>
</feature>
<feature type="modified residue" description="N6-acetyllysine" evidence="2">
    <location>
        <position position="13"/>
    </location>
</feature>
<feature type="modified residue" description="Phosphoserine" evidence="6">
    <location>
        <position position="15"/>
    </location>
</feature>
<feature type="modified residue" description="N6-acetyllysine" evidence="2">
    <location>
        <position position="16"/>
    </location>
</feature>
<feature type="modified residue" description="N6-acetyllysine" evidence="2">
    <location>
        <position position="21"/>
    </location>
</feature>
<feature type="glycosylation site" description="O-linked (GlcNAc) serine" evidence="4">
    <location>
        <position position="113"/>
    </location>
</feature>
<feature type="cross-link" description="Glycyl lysine isopeptide (Lys-Gly) (interchain with G-Cter in ubiquitin)" evidence="2">
    <location>
        <position position="121"/>
    </location>
</feature>
<accession>P06900</accession>
<evidence type="ECO:0000250" key="1"/>
<evidence type="ECO:0000250" key="2">
    <source>
        <dbReference type="UniProtKB" id="P0C1H4"/>
    </source>
</evidence>
<evidence type="ECO:0000250" key="3">
    <source>
        <dbReference type="UniProtKB" id="P33778"/>
    </source>
</evidence>
<evidence type="ECO:0000250" key="4">
    <source>
        <dbReference type="UniProtKB" id="P62807"/>
    </source>
</evidence>
<evidence type="ECO:0000256" key="5">
    <source>
        <dbReference type="SAM" id="MobiDB-lite"/>
    </source>
</evidence>
<evidence type="ECO:0000269" key="6">
    <source>
    </source>
</evidence>
<evidence type="ECO:0000305" key="7"/>